<feature type="chain" id="PRO_0000454491" description="Hydroxyquinol 1,2-dioxygenase">
    <location>
        <begin position="1"/>
        <end position="295"/>
    </location>
</feature>
<feature type="binding site" evidence="1">
    <location>
        <position position="165"/>
    </location>
    <ligand>
        <name>Fe cation</name>
        <dbReference type="ChEBI" id="CHEBI:24875"/>
    </ligand>
</feature>
<feature type="binding site" evidence="1">
    <location>
        <position position="200"/>
    </location>
    <ligand>
        <name>Fe cation</name>
        <dbReference type="ChEBI" id="CHEBI:24875"/>
    </ligand>
</feature>
<feature type="binding site" evidence="1">
    <location>
        <position position="224"/>
    </location>
    <ligand>
        <name>Fe cation</name>
        <dbReference type="ChEBI" id="CHEBI:24875"/>
    </ligand>
</feature>
<feature type="binding site" evidence="1">
    <location>
        <position position="226"/>
    </location>
    <ligand>
        <name>Fe cation</name>
        <dbReference type="ChEBI" id="CHEBI:24875"/>
    </ligand>
</feature>
<keyword id="KW-0223">Dioxygenase</keyword>
<keyword id="KW-0408">Iron</keyword>
<keyword id="KW-0479">Metal-binding</keyword>
<keyword id="KW-0560">Oxidoreductase</keyword>
<name>GRAB_RHIS5</name>
<sequence length="295" mass="33350">MDMKTTGDDGYFVEERSAETVIARMRDCDDPRLKEIMAVVTRKLHEAVKEIEPTEEEWMKAIHFLTEVGQICNEWRQEWILFSDILGVSMLVDAINHRKPSGASESTVLGPFHVADAPEMPMGANICLDGKGEDMLVTGRILDTDGVPVAGARIDVWQANDEGFYDVQQKGIQPDFNLRGVFVTGEDGRYWFRAAKPKYYPIPDDGPVGQLLRAMGRHPYRPAHLHYIVSAEGFTTLVTHIFDPDDPYIRSDAVFGVKESLLADFQRVEDAQRAQELGFANGWFWSVDHDFVLAR</sequence>
<evidence type="ECO:0000250" key="1">
    <source>
        <dbReference type="UniProtKB" id="Q5PXQ6"/>
    </source>
</evidence>
<evidence type="ECO:0000269" key="2">
    <source>
    </source>
</evidence>
<evidence type="ECO:0000303" key="3">
    <source>
    </source>
</evidence>
<evidence type="ECO:0000305" key="4"/>
<protein>
    <recommendedName>
        <fullName evidence="3">Hydroxyquinol 1,2-dioxygenase</fullName>
        <ecNumber evidence="2">1.13.11.37</ecNumber>
    </recommendedName>
</protein>
<proteinExistence type="evidence at protein level"/>
<comment type="function">
    <text evidence="2">Involved in the gamma-resorcylate (2,6-dihydroxybenzoate) catabolism (PubMed:17158677). Catalyzes the conversion of hydroxyquinol to malelylacetate (PubMed:17158677).</text>
</comment>
<comment type="catalytic activity">
    <reaction evidence="2">
        <text>benzene-1,2,4-triol + O2 = maleylacetate + 2 H(+)</text>
        <dbReference type="Rhea" id="RHEA:35595"/>
        <dbReference type="ChEBI" id="CHEBI:15378"/>
        <dbReference type="ChEBI" id="CHEBI:15379"/>
        <dbReference type="ChEBI" id="CHEBI:16468"/>
        <dbReference type="ChEBI" id="CHEBI:16971"/>
        <dbReference type="EC" id="1.13.11.37"/>
    </reaction>
    <physiologicalReaction direction="left-to-right" evidence="2">
        <dbReference type="Rhea" id="RHEA:35596"/>
    </physiologicalReaction>
</comment>
<comment type="cofactor">
    <cofactor evidence="1">
        <name>Fe(3+)</name>
        <dbReference type="ChEBI" id="CHEBI:29034"/>
    </cofactor>
    <text evidence="1">Binds 1 Fe(3+) ion per subunit.</text>
</comment>
<comment type="pathway">
    <text evidence="4">Aromatic compound metabolism.</text>
</comment>
<comment type="induction">
    <text evidence="2">Induced in the presence of gamma-resorcylate.</text>
</comment>
<comment type="similarity">
    <text evidence="4">Belongs to the intradiol ring-cleavage dioxygenase family.</text>
</comment>
<gene>
    <name evidence="3" type="primary">graB</name>
</gene>
<dbReference type="EC" id="1.13.11.37" evidence="2"/>
<dbReference type="EMBL" id="AB266211">
    <property type="protein sequence ID" value="BAF44523.1"/>
    <property type="molecule type" value="Genomic_DNA"/>
</dbReference>
<dbReference type="SMR" id="A1IIX3"/>
<dbReference type="BioCyc" id="MetaCyc:MONOMER-19793"/>
<dbReference type="GO" id="GO:0018576">
    <property type="term" value="F:catechol 1,2-dioxygenase activity"/>
    <property type="evidence" value="ECO:0007669"/>
    <property type="project" value="InterPro"/>
</dbReference>
<dbReference type="GO" id="GO:0008199">
    <property type="term" value="F:ferric iron binding"/>
    <property type="evidence" value="ECO:0007669"/>
    <property type="project" value="InterPro"/>
</dbReference>
<dbReference type="GO" id="GO:0009712">
    <property type="term" value="P:catechol-containing compound metabolic process"/>
    <property type="evidence" value="ECO:0007669"/>
    <property type="project" value="InterPro"/>
</dbReference>
<dbReference type="CDD" id="cd03461">
    <property type="entry name" value="1_2-HQD"/>
    <property type="match status" value="1"/>
</dbReference>
<dbReference type="Gene3D" id="2.60.130.10">
    <property type="entry name" value="Aromatic compound dioxygenase"/>
    <property type="match status" value="1"/>
</dbReference>
<dbReference type="InterPro" id="IPR039390">
    <property type="entry name" value="1_2-HQD/HQD"/>
</dbReference>
<dbReference type="InterPro" id="IPR007535">
    <property type="entry name" value="Catechol_dOase_N"/>
</dbReference>
<dbReference type="InterPro" id="IPR000627">
    <property type="entry name" value="Intradiol_dOase_C"/>
</dbReference>
<dbReference type="InterPro" id="IPR015889">
    <property type="entry name" value="Intradiol_dOase_core"/>
</dbReference>
<dbReference type="InterPro" id="IPR050770">
    <property type="entry name" value="Intradiol_RC_Dioxygenase"/>
</dbReference>
<dbReference type="PANTHER" id="PTHR33711">
    <property type="entry name" value="DIOXYGENASE, PUTATIVE (AFU_ORTHOLOGUE AFUA_2G02910)-RELATED"/>
    <property type="match status" value="1"/>
</dbReference>
<dbReference type="PANTHER" id="PTHR33711:SF7">
    <property type="entry name" value="INTRADIOL RING-CLEAVAGE DIOXYGENASES DOMAIN-CONTAINING PROTEIN-RELATED"/>
    <property type="match status" value="1"/>
</dbReference>
<dbReference type="Pfam" id="PF00775">
    <property type="entry name" value="Dioxygenase_C"/>
    <property type="match status" value="1"/>
</dbReference>
<dbReference type="Pfam" id="PF04444">
    <property type="entry name" value="Dioxygenase_N"/>
    <property type="match status" value="1"/>
</dbReference>
<dbReference type="SUPFAM" id="SSF49482">
    <property type="entry name" value="Aromatic compound dioxygenase"/>
    <property type="match status" value="1"/>
</dbReference>
<dbReference type="PROSITE" id="PS00083">
    <property type="entry name" value="INTRADIOL_DIOXYGENAS"/>
    <property type="match status" value="1"/>
</dbReference>
<accession>A1IIX3</accession>
<organism>
    <name type="scientific">Rhizobium sp. (strain MTP-10005)</name>
    <dbReference type="NCBI Taxonomy" id="267998"/>
    <lineage>
        <taxon>Bacteria</taxon>
        <taxon>Pseudomonadati</taxon>
        <taxon>Pseudomonadota</taxon>
        <taxon>Alphaproteobacteria</taxon>
        <taxon>Hyphomicrobiales</taxon>
        <taxon>Rhizobiaceae</taxon>
        <taxon>Rhizobium/Agrobacterium group</taxon>
        <taxon>Rhizobium</taxon>
    </lineage>
</organism>
<reference key="1">
    <citation type="journal article" date="2007" name="J. Bacteriol.">
        <title>Biochemical and genetic analysis of the gamma-resorcylate (2,6-dihydroxybenzoate) catabolic pathway in Rhizobium sp. strain MTP-10005: identification and functional analysis of its gene cluster.</title>
        <authorList>
            <person name="Yoshida M."/>
            <person name="Oikawa T."/>
            <person name="Obata H."/>
            <person name="Abe K."/>
            <person name="Mihara H."/>
            <person name="Esaki N."/>
        </authorList>
    </citation>
    <scope>NUCLEOTIDE SEQUENCE [GENOMIC DNA]</scope>
    <scope>FUNCTION</scope>
    <scope>CATALYTIC ACTIVITY</scope>
    <scope>INDUCTION</scope>
    <source>
        <strain>MTP-10005</strain>
    </source>
</reference>